<gene>
    <name type="ordered locus">Mflv_4654</name>
</gene>
<protein>
    <recommendedName>
        <fullName evidence="1">UPF0182 protein Mflv_4654</fullName>
    </recommendedName>
</protein>
<proteinExistence type="inferred from homology"/>
<name>Y4654_MYCGI</name>
<organism>
    <name type="scientific">Mycolicibacterium gilvum (strain PYR-GCK)</name>
    <name type="common">Mycobacterium gilvum (strain PYR-GCK)</name>
    <dbReference type="NCBI Taxonomy" id="350054"/>
    <lineage>
        <taxon>Bacteria</taxon>
        <taxon>Bacillati</taxon>
        <taxon>Actinomycetota</taxon>
        <taxon>Actinomycetes</taxon>
        <taxon>Mycobacteriales</taxon>
        <taxon>Mycobacteriaceae</taxon>
        <taxon>Mycolicibacterium</taxon>
    </lineage>
</organism>
<feature type="chain" id="PRO_1000088007" description="UPF0182 protein Mflv_4654">
    <location>
        <begin position="1"/>
        <end position="1004"/>
    </location>
</feature>
<feature type="transmembrane region" description="Helical" evidence="1">
    <location>
        <begin position="18"/>
        <end position="38"/>
    </location>
</feature>
<feature type="transmembrane region" description="Helical" evidence="1">
    <location>
        <begin position="63"/>
        <end position="83"/>
    </location>
</feature>
<feature type="transmembrane region" description="Helical" evidence="1">
    <location>
        <begin position="114"/>
        <end position="134"/>
    </location>
</feature>
<feature type="transmembrane region" description="Helical" evidence="1">
    <location>
        <begin position="176"/>
        <end position="196"/>
    </location>
</feature>
<feature type="transmembrane region" description="Helical" evidence="1">
    <location>
        <begin position="211"/>
        <end position="231"/>
    </location>
</feature>
<feature type="transmembrane region" description="Helical" evidence="1">
    <location>
        <begin position="260"/>
        <end position="280"/>
    </location>
</feature>
<feature type="transmembrane region" description="Helical" evidence="1">
    <location>
        <begin position="288"/>
        <end position="308"/>
    </location>
</feature>
<feature type="region of interest" description="Disordered" evidence="2">
    <location>
        <begin position="896"/>
        <end position="960"/>
    </location>
</feature>
<feature type="compositionally biased region" description="Low complexity" evidence="2">
    <location>
        <begin position="896"/>
        <end position="940"/>
    </location>
</feature>
<sequence>MGMRPAARMPSLTQRSRFLIAVSAVLVLLLLLGPRFIDTYVDWLWFGELGYRSVFTTQIITRLVIFFVVAILVGAVVFAGLALAYRTRPVFVPTAGPNDPIARYRTAVMARLRLIGIGVPLAIGVLAGFVGQSYWQRVQLFLHGGDFGVSDPQFGIDLGFYAFDLPFYRLVLTYLFVGVFLAFLANLLGHYLFGGIRLAGRSGALSRAARIQLITLVGLLMLLKAVAYWFDRYELLSHTRGGKPFTGAGYTDINAVLPAKLILMAIAVICAVAVFSAIFLRDLRIPAIGVVLLLLSSLVVGAGWPLVVEQISVRPNAAQKESEYISRSITATRQAYGLTEESVTYRDYPGNASATAQQVAADRATTSNIRVLDPNIVAPAFTQFQQGKNFYFFPDQLNMDRYRDDSGNLRDYVVAARELNPDRLIDNQRDWINRHTVFTHGNGFIASPANTVRGIANDPNQNGGYPEFLASVVGANGEVSSPGPAPLAQPRIYFGPVIASAADDYAIVGESGTPREYDYETNTDTRNYTYTGSGGVPIGNWLTRSVFAAKYAERNFLFSNVINENSKILFNRDPADRVEAVAPWLTTDTTVYPAIVNERIVWIVDGYTTLDNYPYSELSTLSSVTTDSNEVAQNRLQLDKQVSYIRNSVKATVDAYDGTVTLYAQDEQDPVLQAWMKVFPDSVKPKSDITPELQEHLRYPEDLFKVQRALLAKYHVDDPVTFFSTSDFWDVPLDPNPTASSYQPPYYIVAKDLAENNGSASFQLTSAMNRFRRDFLAAYISASSDPETYGRLTVLTVPGQVNGPKLAFNAISTDTAISTELGQIGRDGQNRIRWGNLLTLPMGDGGLLYVAPIYASPGNTDAASTYPRLIRVAMMYNDQIGYGPTVRDALTDLFGPGADATATGPAATEPPAGQAPQTQGNNTAPPAAQPPNRQGQAPAGRPEVPVAVPPTGPTQLSAAKSAALQDVNAALDALRGAQESGDFAQYGEALQRLDDAVNKYQETD</sequence>
<evidence type="ECO:0000255" key="1">
    <source>
        <dbReference type="HAMAP-Rule" id="MF_01600"/>
    </source>
</evidence>
<evidence type="ECO:0000256" key="2">
    <source>
        <dbReference type="SAM" id="MobiDB-lite"/>
    </source>
</evidence>
<keyword id="KW-1003">Cell membrane</keyword>
<keyword id="KW-0472">Membrane</keyword>
<keyword id="KW-0812">Transmembrane</keyword>
<keyword id="KW-1133">Transmembrane helix</keyword>
<reference key="1">
    <citation type="submission" date="2007-04" db="EMBL/GenBank/DDBJ databases">
        <title>Complete sequence of chromosome of Mycobacterium gilvum PYR-GCK.</title>
        <authorList>
            <consortium name="US DOE Joint Genome Institute"/>
            <person name="Copeland A."/>
            <person name="Lucas S."/>
            <person name="Lapidus A."/>
            <person name="Barry K."/>
            <person name="Detter J.C."/>
            <person name="Glavina del Rio T."/>
            <person name="Hammon N."/>
            <person name="Israni S."/>
            <person name="Dalin E."/>
            <person name="Tice H."/>
            <person name="Pitluck S."/>
            <person name="Chain P."/>
            <person name="Malfatti S."/>
            <person name="Shin M."/>
            <person name="Vergez L."/>
            <person name="Schmutz J."/>
            <person name="Larimer F."/>
            <person name="Land M."/>
            <person name="Hauser L."/>
            <person name="Kyrpides N."/>
            <person name="Mikhailova N."/>
            <person name="Miller C."/>
            <person name="Richardson P."/>
        </authorList>
    </citation>
    <scope>NUCLEOTIDE SEQUENCE [LARGE SCALE GENOMIC DNA]</scope>
    <source>
        <strain>PYR-GCK</strain>
    </source>
</reference>
<dbReference type="EMBL" id="CP000656">
    <property type="protein sequence ID" value="ABP47122.1"/>
    <property type="molecule type" value="Genomic_DNA"/>
</dbReference>
<dbReference type="SMR" id="A4TFF8"/>
<dbReference type="STRING" id="350054.Mflv_4654"/>
<dbReference type="KEGG" id="mgi:Mflv_4654"/>
<dbReference type="eggNOG" id="COG1615">
    <property type="taxonomic scope" value="Bacteria"/>
</dbReference>
<dbReference type="HOGENOM" id="CLU_007733_1_0_11"/>
<dbReference type="OrthoDB" id="9763654at2"/>
<dbReference type="GO" id="GO:0005576">
    <property type="term" value="C:extracellular region"/>
    <property type="evidence" value="ECO:0007669"/>
    <property type="project" value="TreeGrafter"/>
</dbReference>
<dbReference type="GO" id="GO:0005886">
    <property type="term" value="C:plasma membrane"/>
    <property type="evidence" value="ECO:0007669"/>
    <property type="project" value="UniProtKB-SubCell"/>
</dbReference>
<dbReference type="HAMAP" id="MF_01600">
    <property type="entry name" value="UPF0182"/>
    <property type="match status" value="1"/>
</dbReference>
<dbReference type="InterPro" id="IPR005372">
    <property type="entry name" value="UPF0182"/>
</dbReference>
<dbReference type="NCBIfam" id="NF000825">
    <property type="entry name" value="PRK00068.1"/>
    <property type="match status" value="1"/>
</dbReference>
<dbReference type="NCBIfam" id="NF009097">
    <property type="entry name" value="PRK12438.1"/>
    <property type="match status" value="1"/>
</dbReference>
<dbReference type="PANTHER" id="PTHR39344">
    <property type="entry name" value="UPF0182 PROTEIN SLL1060"/>
    <property type="match status" value="1"/>
</dbReference>
<dbReference type="PANTHER" id="PTHR39344:SF1">
    <property type="entry name" value="UPF0182 PROTEIN SLL1060"/>
    <property type="match status" value="1"/>
</dbReference>
<dbReference type="Pfam" id="PF03699">
    <property type="entry name" value="UPF0182"/>
    <property type="match status" value="1"/>
</dbReference>
<comment type="subcellular location">
    <subcellularLocation>
        <location evidence="1">Cell membrane</location>
        <topology evidence="1">Multi-pass membrane protein</topology>
    </subcellularLocation>
</comment>
<comment type="similarity">
    <text evidence="1">Belongs to the UPF0182 family.</text>
</comment>
<accession>A4TFF8</accession>